<sequence>MEVNVLNIKGEDTGRKVTLNESIFGIEPNDHAIYLDVKQFMANQRQGTHKSKERSEISGSTRKLGRQKGGGGARRGDINSPVLVGGARVFGPKPRDYWFKLNKKVKTLARKSALSYKAQENAIIIVEDFTFEAPKTKDFVSMVNNLKIADKKLLLVLPEANKNVYLSARNIERANVAIASALNTYNVLNAETLVVTENSLKAIENILS</sequence>
<feature type="chain" id="PRO_1000052356" description="Large ribosomal subunit protein uL4">
    <location>
        <begin position="1"/>
        <end position="208"/>
    </location>
</feature>
<feature type="region of interest" description="Disordered" evidence="2">
    <location>
        <begin position="44"/>
        <end position="79"/>
    </location>
</feature>
<keyword id="KW-0687">Ribonucleoprotein</keyword>
<keyword id="KW-0689">Ribosomal protein</keyword>
<keyword id="KW-0694">RNA-binding</keyword>
<keyword id="KW-0699">rRNA-binding</keyword>
<reference key="1">
    <citation type="journal article" date="2007" name="PLoS Biol.">
        <title>Evolution of symbiotic bacteria in the distal human intestine.</title>
        <authorList>
            <person name="Xu J."/>
            <person name="Mahowald M.A."/>
            <person name="Ley R.E."/>
            <person name="Lozupone C.A."/>
            <person name="Hamady M."/>
            <person name="Martens E.C."/>
            <person name="Henrissat B."/>
            <person name="Coutinho P.M."/>
            <person name="Minx P."/>
            <person name="Latreille P."/>
            <person name="Cordum H."/>
            <person name="Van Brunt A."/>
            <person name="Kim K."/>
            <person name="Fulton R.S."/>
            <person name="Fulton L.A."/>
            <person name="Clifton S.W."/>
            <person name="Wilson R.K."/>
            <person name="Knight R.D."/>
            <person name="Gordon J.I."/>
        </authorList>
    </citation>
    <scope>NUCLEOTIDE SEQUENCE [LARGE SCALE GENOMIC DNA]</scope>
    <source>
        <strain>ATCC 8482 / DSM 1447 / JCM 5826 / CCUG 4940 / NBRC 14291 / NCTC 11154</strain>
    </source>
</reference>
<protein>
    <recommendedName>
        <fullName evidence="1">Large ribosomal subunit protein uL4</fullName>
    </recommendedName>
    <alternativeName>
        <fullName evidence="3">50S ribosomal protein L4</fullName>
    </alternativeName>
</protein>
<proteinExistence type="inferred from homology"/>
<comment type="function">
    <text evidence="1">One of the primary rRNA binding proteins, this protein initially binds near the 5'-end of the 23S rRNA. It is important during the early stages of 50S assembly. It makes multiple contacts with different domains of the 23S rRNA in the assembled 50S subunit and ribosome.</text>
</comment>
<comment type="function">
    <text evidence="1">Forms part of the polypeptide exit tunnel.</text>
</comment>
<comment type="subunit">
    <text evidence="1">Part of the 50S ribosomal subunit.</text>
</comment>
<comment type="similarity">
    <text evidence="1">Belongs to the universal ribosomal protein uL4 family.</text>
</comment>
<name>RL4_PHOV8</name>
<gene>
    <name evidence="1" type="primary">rplD</name>
    <name type="ordered locus">BVU_0804</name>
</gene>
<organism>
    <name type="scientific">Phocaeicola vulgatus (strain ATCC 8482 / DSM 1447 / JCM 5826 / CCUG 4940 / NBRC 14291 / NCTC 11154)</name>
    <name type="common">Bacteroides vulgatus</name>
    <dbReference type="NCBI Taxonomy" id="435590"/>
    <lineage>
        <taxon>Bacteria</taxon>
        <taxon>Pseudomonadati</taxon>
        <taxon>Bacteroidota</taxon>
        <taxon>Bacteroidia</taxon>
        <taxon>Bacteroidales</taxon>
        <taxon>Bacteroidaceae</taxon>
        <taxon>Phocaeicola</taxon>
    </lineage>
</organism>
<dbReference type="EMBL" id="CP000139">
    <property type="protein sequence ID" value="ABR38508.1"/>
    <property type="molecule type" value="Genomic_DNA"/>
</dbReference>
<dbReference type="RefSeq" id="WP_005844849.1">
    <property type="nucleotide sequence ID" value="NZ_CAXVNH010000001.1"/>
</dbReference>
<dbReference type="SMR" id="A6KYJ4"/>
<dbReference type="STRING" id="435590.BVU_0804"/>
<dbReference type="PaxDb" id="435590-BVU_0804"/>
<dbReference type="GeneID" id="5301771"/>
<dbReference type="KEGG" id="bvu:BVU_0804"/>
<dbReference type="eggNOG" id="COG0088">
    <property type="taxonomic scope" value="Bacteria"/>
</dbReference>
<dbReference type="HOGENOM" id="CLU_041575_5_2_10"/>
<dbReference type="BioCyc" id="BVUL435590:G1G59-846-MONOMER"/>
<dbReference type="Proteomes" id="UP000002861">
    <property type="component" value="Chromosome"/>
</dbReference>
<dbReference type="GO" id="GO:1990904">
    <property type="term" value="C:ribonucleoprotein complex"/>
    <property type="evidence" value="ECO:0007669"/>
    <property type="project" value="UniProtKB-KW"/>
</dbReference>
<dbReference type="GO" id="GO:0005840">
    <property type="term" value="C:ribosome"/>
    <property type="evidence" value="ECO:0007669"/>
    <property type="project" value="UniProtKB-KW"/>
</dbReference>
<dbReference type="GO" id="GO:0019843">
    <property type="term" value="F:rRNA binding"/>
    <property type="evidence" value="ECO:0007669"/>
    <property type="project" value="UniProtKB-UniRule"/>
</dbReference>
<dbReference type="GO" id="GO:0003735">
    <property type="term" value="F:structural constituent of ribosome"/>
    <property type="evidence" value="ECO:0007669"/>
    <property type="project" value="InterPro"/>
</dbReference>
<dbReference type="GO" id="GO:0006412">
    <property type="term" value="P:translation"/>
    <property type="evidence" value="ECO:0007669"/>
    <property type="project" value="UniProtKB-UniRule"/>
</dbReference>
<dbReference type="FunFam" id="3.40.1370.10:FF:000009">
    <property type="entry name" value="50S ribosomal protein L4"/>
    <property type="match status" value="1"/>
</dbReference>
<dbReference type="Gene3D" id="3.40.1370.10">
    <property type="match status" value="1"/>
</dbReference>
<dbReference type="HAMAP" id="MF_01328_B">
    <property type="entry name" value="Ribosomal_uL4_B"/>
    <property type="match status" value="1"/>
</dbReference>
<dbReference type="InterPro" id="IPR002136">
    <property type="entry name" value="Ribosomal_uL4"/>
</dbReference>
<dbReference type="InterPro" id="IPR013005">
    <property type="entry name" value="Ribosomal_uL4-like"/>
</dbReference>
<dbReference type="InterPro" id="IPR023574">
    <property type="entry name" value="Ribosomal_uL4_dom_sf"/>
</dbReference>
<dbReference type="NCBIfam" id="TIGR03953">
    <property type="entry name" value="rplD_bact"/>
    <property type="match status" value="1"/>
</dbReference>
<dbReference type="PANTHER" id="PTHR10746">
    <property type="entry name" value="50S RIBOSOMAL PROTEIN L4"/>
    <property type="match status" value="1"/>
</dbReference>
<dbReference type="PANTHER" id="PTHR10746:SF6">
    <property type="entry name" value="LARGE RIBOSOMAL SUBUNIT PROTEIN UL4M"/>
    <property type="match status" value="1"/>
</dbReference>
<dbReference type="Pfam" id="PF00573">
    <property type="entry name" value="Ribosomal_L4"/>
    <property type="match status" value="1"/>
</dbReference>
<dbReference type="SUPFAM" id="SSF52166">
    <property type="entry name" value="Ribosomal protein L4"/>
    <property type="match status" value="1"/>
</dbReference>
<accession>A6KYJ4</accession>
<evidence type="ECO:0000255" key="1">
    <source>
        <dbReference type="HAMAP-Rule" id="MF_01328"/>
    </source>
</evidence>
<evidence type="ECO:0000256" key="2">
    <source>
        <dbReference type="SAM" id="MobiDB-lite"/>
    </source>
</evidence>
<evidence type="ECO:0000305" key="3"/>